<comment type="function">
    <text>The primary product of this enzyme is 4,2',4',6'-tetrahydroxychalcone (also termed naringenin-chalcone or chalcone) which can under specific conditions spontaneously isomerize into naringenin.</text>
</comment>
<comment type="catalytic activity">
    <reaction evidence="1">
        <text>(E)-4-coumaroyl-CoA + 3 malonyl-CoA + 3 H(+) = 2',4,4',6'-tetrahydroxychalcone + 3 CO2 + 4 CoA</text>
        <dbReference type="Rhea" id="RHEA:11128"/>
        <dbReference type="ChEBI" id="CHEBI:15378"/>
        <dbReference type="ChEBI" id="CHEBI:15413"/>
        <dbReference type="ChEBI" id="CHEBI:16526"/>
        <dbReference type="ChEBI" id="CHEBI:57287"/>
        <dbReference type="ChEBI" id="CHEBI:57384"/>
        <dbReference type="ChEBI" id="CHEBI:85008"/>
        <dbReference type="EC" id="2.3.1.74"/>
    </reaction>
</comment>
<comment type="pathway">
    <text>Secondary metabolite biosynthesis; flavonoid biosynthesis.</text>
</comment>
<comment type="similarity">
    <text evidence="2">Belongs to the thiolase-like superfamily. Chalcone/stilbene synthases family.</text>
</comment>
<feature type="chain" id="PRO_0000215968" description="Chalcone synthase 1">
    <location>
        <begin position="1"/>
        <end position="389"/>
    </location>
</feature>
<feature type="active site" evidence="1">
    <location>
        <position position="163"/>
    </location>
</feature>
<organism>
    <name type="scientific">Citrus sinensis</name>
    <name type="common">Sweet orange</name>
    <name type="synonym">Citrus aurantium var. sinensis</name>
    <dbReference type="NCBI Taxonomy" id="2711"/>
    <lineage>
        <taxon>Eukaryota</taxon>
        <taxon>Viridiplantae</taxon>
        <taxon>Streptophyta</taxon>
        <taxon>Embryophyta</taxon>
        <taxon>Tracheophyta</taxon>
        <taxon>Spermatophyta</taxon>
        <taxon>Magnoliopsida</taxon>
        <taxon>eudicotyledons</taxon>
        <taxon>Gunneridae</taxon>
        <taxon>Pentapetalae</taxon>
        <taxon>rosids</taxon>
        <taxon>malvids</taxon>
        <taxon>Sapindales</taxon>
        <taxon>Rutaceae</taxon>
        <taxon>Aurantioideae</taxon>
        <taxon>Citrus</taxon>
    </lineage>
</organism>
<reference key="1">
    <citation type="journal article" date="1999" name="Plant Cell Physiol.">
        <title>One type of chalcone synthase gene expressed during embryogenesis regulates the flavonoid accumulation in citrus cell cultures.</title>
        <authorList>
            <person name="Moriguchi T."/>
            <person name="Kita M."/>
            <person name="Tomono Y."/>
            <person name="Endo-Inagaki T."/>
            <person name="Omura M."/>
        </authorList>
    </citation>
    <scope>NUCLEOTIDE SEQUENCE [MRNA]</scope>
</reference>
<dbReference type="EC" id="2.3.1.74"/>
<dbReference type="EMBL" id="AB009350">
    <property type="protein sequence ID" value="BAA81663.1"/>
    <property type="molecule type" value="mRNA"/>
</dbReference>
<dbReference type="SMR" id="Q9XJ58"/>
<dbReference type="PaxDb" id="2711-XP_006489796.1"/>
<dbReference type="eggNOG" id="ENOG502QRSY">
    <property type="taxonomic scope" value="Eukaryota"/>
</dbReference>
<dbReference type="UniPathway" id="UPA00154"/>
<dbReference type="GO" id="GO:0016210">
    <property type="term" value="F:naringenin-chalcone synthase activity"/>
    <property type="evidence" value="ECO:0007669"/>
    <property type="project" value="UniProtKB-EC"/>
</dbReference>
<dbReference type="GO" id="GO:0009813">
    <property type="term" value="P:flavonoid biosynthetic process"/>
    <property type="evidence" value="ECO:0007669"/>
    <property type="project" value="UniProtKB-UniPathway"/>
</dbReference>
<dbReference type="CDD" id="cd00831">
    <property type="entry name" value="CHS_like"/>
    <property type="match status" value="1"/>
</dbReference>
<dbReference type="FunFam" id="3.40.47.10:FF:000014">
    <property type="entry name" value="Chalcone synthase 1"/>
    <property type="match status" value="1"/>
</dbReference>
<dbReference type="FunFam" id="3.40.47.10:FF:000025">
    <property type="entry name" value="Chalcone synthase 2"/>
    <property type="match status" value="1"/>
</dbReference>
<dbReference type="Gene3D" id="3.40.47.10">
    <property type="match status" value="2"/>
</dbReference>
<dbReference type="InterPro" id="IPR012328">
    <property type="entry name" value="Chalcone/stilbene_synt_C"/>
</dbReference>
<dbReference type="InterPro" id="IPR001099">
    <property type="entry name" value="Chalcone/stilbene_synt_N"/>
</dbReference>
<dbReference type="InterPro" id="IPR018088">
    <property type="entry name" value="Chalcone/stilbene_synthase_AS"/>
</dbReference>
<dbReference type="InterPro" id="IPR011141">
    <property type="entry name" value="Polyketide_synthase_type-III"/>
</dbReference>
<dbReference type="InterPro" id="IPR016039">
    <property type="entry name" value="Thiolase-like"/>
</dbReference>
<dbReference type="PANTHER" id="PTHR11877:SF80">
    <property type="entry name" value="CHALCONE SYNTHASE 1"/>
    <property type="match status" value="1"/>
</dbReference>
<dbReference type="PANTHER" id="PTHR11877">
    <property type="entry name" value="HYDROXYMETHYLGLUTARYL-COA SYNTHASE"/>
    <property type="match status" value="1"/>
</dbReference>
<dbReference type="Pfam" id="PF02797">
    <property type="entry name" value="Chal_sti_synt_C"/>
    <property type="match status" value="1"/>
</dbReference>
<dbReference type="Pfam" id="PF00195">
    <property type="entry name" value="Chal_sti_synt_N"/>
    <property type="match status" value="1"/>
</dbReference>
<dbReference type="PIRSF" id="PIRSF000451">
    <property type="entry name" value="PKS_III"/>
    <property type="match status" value="1"/>
</dbReference>
<dbReference type="SUPFAM" id="SSF53901">
    <property type="entry name" value="Thiolase-like"/>
    <property type="match status" value="2"/>
</dbReference>
<dbReference type="PROSITE" id="PS00441">
    <property type="entry name" value="CHALCONE_SYNTH"/>
    <property type="match status" value="1"/>
</dbReference>
<name>CHS1_CITSI</name>
<proteinExistence type="evidence at transcript level"/>
<accession>Q9XJ58</accession>
<keyword id="KW-0012">Acyltransferase</keyword>
<keyword id="KW-0284">Flavonoid biosynthesis</keyword>
<keyword id="KW-0808">Transferase</keyword>
<sequence length="389" mass="42547">MVTVDEVRKAQRAQGPATIMAIGTATPPNCVDQSTYPDYYFRITNSEHMTDLKEKFKRMCDKSMIKKRYMYLTEEILKENPNVCAYMAPSLDTRQDMVVVEVPRLGKAATEAIKEWGQPKSKITHLVFCTTSGVDMPGADYRLTKLLGLRPSVKRLMMYQQGCFAGGTVLRLAKDLAENNKGARVLVVCSEITAVTFRGPSDTHLDSLVGQALFGDGAAAIIIGADPIPEIEKPMFELVSTAQTILPDSDGSIDGHLREAGLTFHLLKDVPGLISKNIQKSLTEAFKPLGISDWNSIFWIAHPGGPAILDQVEEKLGLKPEKLRATRHVLSEYGNMSSACVLFILDEMRKKSAEDGLETAGEGLEWGVLFGFGPGLTVETVVLHSVAAA</sequence>
<gene>
    <name type="primary">CHS1</name>
</gene>
<protein>
    <recommendedName>
        <fullName>Chalcone synthase 1</fullName>
        <ecNumber>2.3.1.74</ecNumber>
    </recommendedName>
    <alternativeName>
        <fullName>Naringenin-chalcone synthase 1</fullName>
    </alternativeName>
</protein>
<evidence type="ECO:0000255" key="1">
    <source>
        <dbReference type="PROSITE-ProRule" id="PRU10023"/>
    </source>
</evidence>
<evidence type="ECO:0000305" key="2"/>